<gene>
    <name type="primary">trxA</name>
    <name type="ordered locus">jhp_0763</name>
</gene>
<dbReference type="EMBL" id="AE001439">
    <property type="protein sequence ID" value="AAD06342.1"/>
    <property type="molecule type" value="Genomic_DNA"/>
</dbReference>
<dbReference type="RefSeq" id="WP_000020199.1">
    <property type="nucleotide sequence ID" value="NZ_CP011330.1"/>
</dbReference>
<dbReference type="SMR" id="P66929"/>
<dbReference type="KEGG" id="hpj:jhp_0763"/>
<dbReference type="PATRIC" id="fig|85963.30.peg.213"/>
<dbReference type="eggNOG" id="COG3118">
    <property type="taxonomic scope" value="Bacteria"/>
</dbReference>
<dbReference type="Proteomes" id="UP000000804">
    <property type="component" value="Chromosome"/>
</dbReference>
<dbReference type="GO" id="GO:0005829">
    <property type="term" value="C:cytosol"/>
    <property type="evidence" value="ECO:0007669"/>
    <property type="project" value="TreeGrafter"/>
</dbReference>
<dbReference type="GO" id="GO:0015035">
    <property type="term" value="F:protein-disulfide reductase activity"/>
    <property type="evidence" value="ECO:0007669"/>
    <property type="project" value="InterPro"/>
</dbReference>
<dbReference type="GO" id="GO:0045454">
    <property type="term" value="P:cell redox homeostasis"/>
    <property type="evidence" value="ECO:0007669"/>
    <property type="project" value="TreeGrafter"/>
</dbReference>
<dbReference type="CDD" id="cd02947">
    <property type="entry name" value="TRX_family"/>
    <property type="match status" value="1"/>
</dbReference>
<dbReference type="FunFam" id="3.40.30.10:FF:000001">
    <property type="entry name" value="Thioredoxin"/>
    <property type="match status" value="1"/>
</dbReference>
<dbReference type="Gene3D" id="3.40.30.10">
    <property type="entry name" value="Glutaredoxin"/>
    <property type="match status" value="1"/>
</dbReference>
<dbReference type="InterPro" id="IPR005746">
    <property type="entry name" value="Thioredoxin"/>
</dbReference>
<dbReference type="InterPro" id="IPR036249">
    <property type="entry name" value="Thioredoxin-like_sf"/>
</dbReference>
<dbReference type="InterPro" id="IPR017937">
    <property type="entry name" value="Thioredoxin_CS"/>
</dbReference>
<dbReference type="InterPro" id="IPR013766">
    <property type="entry name" value="Thioredoxin_domain"/>
</dbReference>
<dbReference type="NCBIfam" id="TIGR01068">
    <property type="entry name" value="thioredoxin"/>
    <property type="match status" value="1"/>
</dbReference>
<dbReference type="PANTHER" id="PTHR45663">
    <property type="entry name" value="GEO12009P1"/>
    <property type="match status" value="1"/>
</dbReference>
<dbReference type="PANTHER" id="PTHR45663:SF11">
    <property type="entry name" value="GEO12009P1"/>
    <property type="match status" value="1"/>
</dbReference>
<dbReference type="Pfam" id="PF00085">
    <property type="entry name" value="Thioredoxin"/>
    <property type="match status" value="1"/>
</dbReference>
<dbReference type="PIRSF" id="PIRSF000077">
    <property type="entry name" value="Thioredoxin"/>
    <property type="match status" value="1"/>
</dbReference>
<dbReference type="PRINTS" id="PR00421">
    <property type="entry name" value="THIOREDOXIN"/>
</dbReference>
<dbReference type="SUPFAM" id="SSF52833">
    <property type="entry name" value="Thioredoxin-like"/>
    <property type="match status" value="1"/>
</dbReference>
<dbReference type="PROSITE" id="PS00194">
    <property type="entry name" value="THIOREDOXIN_1"/>
    <property type="match status" value="1"/>
</dbReference>
<dbReference type="PROSITE" id="PS51352">
    <property type="entry name" value="THIOREDOXIN_2"/>
    <property type="match status" value="1"/>
</dbReference>
<organism>
    <name type="scientific">Helicobacter pylori (strain J99 / ATCC 700824)</name>
    <name type="common">Campylobacter pylori J99</name>
    <dbReference type="NCBI Taxonomy" id="85963"/>
    <lineage>
        <taxon>Bacteria</taxon>
        <taxon>Pseudomonadati</taxon>
        <taxon>Campylobacterota</taxon>
        <taxon>Epsilonproteobacteria</taxon>
        <taxon>Campylobacterales</taxon>
        <taxon>Helicobacteraceae</taxon>
        <taxon>Helicobacter</taxon>
    </lineage>
</organism>
<accession>P66929</accession>
<accession>P56430</accession>
<keyword id="KW-1015">Disulfide bond</keyword>
<keyword id="KW-0249">Electron transport</keyword>
<keyword id="KW-0676">Redox-active center</keyword>
<keyword id="KW-0813">Transport</keyword>
<reference key="1">
    <citation type="journal article" date="1999" name="Nature">
        <title>Genomic sequence comparison of two unrelated isolates of the human gastric pathogen Helicobacter pylori.</title>
        <authorList>
            <person name="Alm R.A."/>
            <person name="Ling L.-S.L."/>
            <person name="Moir D.T."/>
            <person name="King B.L."/>
            <person name="Brown E.D."/>
            <person name="Doig P.C."/>
            <person name="Smith D.R."/>
            <person name="Noonan B."/>
            <person name="Guild B.C."/>
            <person name="deJonge B.L."/>
            <person name="Carmel G."/>
            <person name="Tummino P.J."/>
            <person name="Caruso A."/>
            <person name="Uria-Nickelsen M."/>
            <person name="Mills D.M."/>
            <person name="Ives C."/>
            <person name="Gibson R."/>
            <person name="Merberg D."/>
            <person name="Mills S.D."/>
            <person name="Jiang Q."/>
            <person name="Taylor D.E."/>
            <person name="Vovis G.F."/>
            <person name="Trust T.J."/>
        </authorList>
    </citation>
    <scope>NUCLEOTIDE SEQUENCE [LARGE SCALE GENOMIC DNA]</scope>
    <source>
        <strain>J99 / ATCC 700824</strain>
    </source>
</reference>
<protein>
    <recommendedName>
        <fullName>Thioredoxin</fullName>
        <shortName>Trx</shortName>
    </recommendedName>
</protein>
<sequence length="106" mass="11855">MSHYIELTEENFESTIKKGVALVDFWAPWCGPCKMLSPVIDELASEYEGKAKICKVNTDEQEELSAKFGIRSIPTLLFTKDGEVVHQLVGVQTKVALKEQLNKLLG</sequence>
<feature type="chain" id="PRO_0000120109" description="Thioredoxin">
    <location>
        <begin position="1"/>
        <end position="106"/>
    </location>
</feature>
<feature type="domain" description="Thioredoxin" evidence="2">
    <location>
        <begin position="2"/>
        <end position="106"/>
    </location>
</feature>
<feature type="disulfide bond" description="Redox-active" evidence="2">
    <location>
        <begin position="30"/>
        <end position="33"/>
    </location>
</feature>
<proteinExistence type="inferred from homology"/>
<evidence type="ECO:0000250" key="1"/>
<evidence type="ECO:0000255" key="2">
    <source>
        <dbReference type="PROSITE-ProRule" id="PRU00691"/>
    </source>
</evidence>
<evidence type="ECO:0000305" key="3"/>
<name>THIO_HELPJ</name>
<comment type="function">
    <text evidence="1">Participates in various redox reactions through the reversible oxidation of its active center dithiol to a disulfide and catalyzes dithiol-disulfide exchange reactions.</text>
</comment>
<comment type="similarity">
    <text evidence="3">Belongs to the thioredoxin family.</text>
</comment>